<comment type="function">
    <text evidence="1">DNA-binding protein involved in cell cycle control. May act as a transcription activator. Plays a role in pre-mRNA splicing as core component of precatalytic, catalytic and postcatalytic spliceosomal complexes. May also play a role in the response to DNA damage (DDR).</text>
</comment>
<comment type="subunit">
    <text evidence="1">Component of the precatalytic, catalytic and postcatalytic spliceosome complexes.</text>
</comment>
<comment type="subcellular location">
    <subcellularLocation>
        <location evidence="3">Nucleus</location>
    </subcellularLocation>
    <subcellularLocation>
        <location evidence="1">Cytoplasm</location>
    </subcellularLocation>
    <text evidence="1">May shuttle between cytoplasm and nucleus.</text>
</comment>
<comment type="similarity">
    <text evidence="5">Belongs to the CEF1 family.</text>
</comment>
<dbReference type="EMBL" id="DS469628">
    <property type="protein sequence ID" value="EDO38320.1"/>
    <property type="molecule type" value="Genomic_DNA"/>
</dbReference>
<dbReference type="RefSeq" id="XP_001630383.1">
    <property type="nucleotide sequence ID" value="XM_001630333.1"/>
</dbReference>
<dbReference type="BMRB" id="A7SD85"/>
<dbReference type="SMR" id="A7SD85"/>
<dbReference type="STRING" id="45351.A7SD85"/>
<dbReference type="EnsemblMetazoa" id="EDO38320">
    <property type="protein sequence ID" value="EDO38320"/>
    <property type="gene ID" value="NEMVEDRAFT_v1g169217"/>
</dbReference>
<dbReference type="GeneID" id="5509907"/>
<dbReference type="KEGG" id="nve:5509907"/>
<dbReference type="eggNOG" id="KOG0050">
    <property type="taxonomic scope" value="Eukaryota"/>
</dbReference>
<dbReference type="HOGENOM" id="CLU_009082_0_0_1"/>
<dbReference type="InParanoid" id="A7SD85"/>
<dbReference type="OMA" id="KMGMAGE"/>
<dbReference type="OrthoDB" id="1410009at2759"/>
<dbReference type="PhylomeDB" id="A7SD85"/>
<dbReference type="Proteomes" id="UP000001593">
    <property type="component" value="Unassembled WGS sequence"/>
</dbReference>
<dbReference type="GO" id="GO:0005737">
    <property type="term" value="C:cytoplasm"/>
    <property type="evidence" value="ECO:0007669"/>
    <property type="project" value="UniProtKB-SubCell"/>
</dbReference>
<dbReference type="GO" id="GO:0000974">
    <property type="term" value="C:Prp19 complex"/>
    <property type="evidence" value="ECO:0000318"/>
    <property type="project" value="GO_Central"/>
</dbReference>
<dbReference type="GO" id="GO:0005681">
    <property type="term" value="C:spliceosomal complex"/>
    <property type="evidence" value="ECO:0000318"/>
    <property type="project" value="GO_Central"/>
</dbReference>
<dbReference type="GO" id="GO:0000981">
    <property type="term" value="F:DNA-binding transcription factor activity, RNA polymerase II-specific"/>
    <property type="evidence" value="ECO:0000318"/>
    <property type="project" value="GO_Central"/>
</dbReference>
<dbReference type="GO" id="GO:0003723">
    <property type="term" value="F:RNA binding"/>
    <property type="evidence" value="ECO:0007669"/>
    <property type="project" value="UniProtKB-KW"/>
</dbReference>
<dbReference type="GO" id="GO:0000977">
    <property type="term" value="F:RNA polymerase II transcription regulatory region sequence-specific DNA binding"/>
    <property type="evidence" value="ECO:0000318"/>
    <property type="project" value="GO_Central"/>
</dbReference>
<dbReference type="GO" id="GO:0006281">
    <property type="term" value="P:DNA repair"/>
    <property type="evidence" value="ECO:0007669"/>
    <property type="project" value="UniProtKB-KW"/>
</dbReference>
<dbReference type="GO" id="GO:0000398">
    <property type="term" value="P:mRNA splicing, via spliceosome"/>
    <property type="evidence" value="ECO:0000318"/>
    <property type="project" value="GO_Central"/>
</dbReference>
<dbReference type="GO" id="GO:0006357">
    <property type="term" value="P:regulation of transcription by RNA polymerase II"/>
    <property type="evidence" value="ECO:0000318"/>
    <property type="project" value="GO_Central"/>
</dbReference>
<dbReference type="CDD" id="cd00167">
    <property type="entry name" value="SANT"/>
    <property type="match status" value="1"/>
</dbReference>
<dbReference type="CDD" id="cd11659">
    <property type="entry name" value="SANT_CDC5_II"/>
    <property type="match status" value="1"/>
</dbReference>
<dbReference type="FunFam" id="1.10.10.60:FF:000021">
    <property type="entry name" value="CDC5 cell division cycle 5-like"/>
    <property type="match status" value="1"/>
</dbReference>
<dbReference type="FunFam" id="1.10.10.60:FF:000091">
    <property type="entry name" value="CDC5 cell division cycle 5-like"/>
    <property type="match status" value="1"/>
</dbReference>
<dbReference type="Gene3D" id="1.10.10.60">
    <property type="entry name" value="Homeodomain-like"/>
    <property type="match status" value="2"/>
</dbReference>
<dbReference type="InterPro" id="IPR047242">
    <property type="entry name" value="CDC5L/Cef1"/>
</dbReference>
<dbReference type="InterPro" id="IPR021786">
    <property type="entry name" value="Cdc5p/Cef1_C"/>
</dbReference>
<dbReference type="InterPro" id="IPR009057">
    <property type="entry name" value="Homeodomain-like_sf"/>
</dbReference>
<dbReference type="InterPro" id="IPR017930">
    <property type="entry name" value="Myb_dom"/>
</dbReference>
<dbReference type="InterPro" id="IPR001005">
    <property type="entry name" value="SANT/Myb"/>
</dbReference>
<dbReference type="InterPro" id="IPR047240">
    <property type="entry name" value="SANT_CDC5L_II"/>
</dbReference>
<dbReference type="PANTHER" id="PTHR45885">
    <property type="entry name" value="CELL DIVISION CYCLE 5-LIKE PROTEIN"/>
    <property type="match status" value="1"/>
</dbReference>
<dbReference type="PANTHER" id="PTHR45885:SF1">
    <property type="entry name" value="CELL DIVISION CYCLE 5-LIKE PROTEIN"/>
    <property type="match status" value="1"/>
</dbReference>
<dbReference type="Pfam" id="PF11831">
    <property type="entry name" value="Myb_Cef"/>
    <property type="match status" value="1"/>
</dbReference>
<dbReference type="Pfam" id="PF13921">
    <property type="entry name" value="Myb_DNA-bind_6"/>
    <property type="match status" value="1"/>
</dbReference>
<dbReference type="SMART" id="SM00717">
    <property type="entry name" value="SANT"/>
    <property type="match status" value="2"/>
</dbReference>
<dbReference type="SUPFAM" id="SSF46689">
    <property type="entry name" value="Homeodomain-like"/>
    <property type="match status" value="1"/>
</dbReference>
<dbReference type="PROSITE" id="PS51294">
    <property type="entry name" value="HTH_MYB"/>
    <property type="match status" value="2"/>
</dbReference>
<organism>
    <name type="scientific">Nematostella vectensis</name>
    <name type="common">Starlet sea anemone</name>
    <dbReference type="NCBI Taxonomy" id="45351"/>
    <lineage>
        <taxon>Eukaryota</taxon>
        <taxon>Metazoa</taxon>
        <taxon>Cnidaria</taxon>
        <taxon>Anthozoa</taxon>
        <taxon>Hexacorallia</taxon>
        <taxon>Actiniaria</taxon>
        <taxon>Edwardsiidae</taxon>
        <taxon>Nematostella</taxon>
    </lineage>
</organism>
<reference key="1">
    <citation type="journal article" date="2007" name="Science">
        <title>Sea anemone genome reveals ancestral eumetazoan gene repertoire and genomic organization.</title>
        <authorList>
            <person name="Putnam N.H."/>
            <person name="Srivastava M."/>
            <person name="Hellsten U."/>
            <person name="Dirks B."/>
            <person name="Chapman J."/>
            <person name="Salamov A."/>
            <person name="Terry A."/>
            <person name="Shapiro H."/>
            <person name="Lindquist E."/>
            <person name="Kapitonov V.V."/>
            <person name="Jurka J."/>
            <person name="Genikhovich G."/>
            <person name="Grigoriev I.V."/>
            <person name="Lucas S.M."/>
            <person name="Steele R.E."/>
            <person name="Finnerty J.R."/>
            <person name="Technau U."/>
            <person name="Martindale M.Q."/>
            <person name="Rokhsar D.S."/>
        </authorList>
    </citation>
    <scope>NUCLEOTIDE SEQUENCE [LARGE SCALE GENOMIC DNA]</scope>
    <source>
        <strain>CH2 X CH6</strain>
    </source>
</reference>
<gene>
    <name type="primary">cdc5l</name>
    <name type="ORF">v1g169217</name>
</gene>
<sequence length="805" mass="91940">MPRIIIKGGVWRNTEDEILKAAVMKYGKNQWSRIASLLHRKSAKQCKARWYEWLDPSIKKTEWSREEDEKLLHLAKLMPTQWRTIAPLIGRTAAQCLERYEYLLDQAQAKEGDKDEGDDPRKLRPGEIDPNPETKPARPDPIDMDEDELEMLSEARARLANTQGKKAKRKAREKQLEEARRLAALQKRRELRAAGIDIRKHRKKKRGVDYNAEIPFEKKPASGFYDTSDENLPDYQPDFKRLRQDHLEGKMRDEIEQQERKKDKERMKKKKESDLPGAVMQINKMNNPDHVKKRSKLVLPKPQISDGELEEIVKMGYASEVARASVENGGQASDALLSEYSVTPAINKALRTPRTPAEQDTVLQEAQNILALSNVDTPLKGGLNTPMHESDFQGVTPRQQAIQTPNMLLSTPYRTPGEGSGSTPRQGMTPRGAIGTPSQRSVRDKLNINPEDAVMEEYESECAAKQQQSEAKEQLLAGLASLPAPSNDFEIVLPETPAEASEEHKPMDFVEDAADIDERALALRAKQEELERRRRSQAVQRELPRPSNVNTSVLRPTNVEPPLSALQMAEELIKKEMIVMLRNDIINHPTSQQIESLTNKKTRNAAQAVITGNRAALERDPMENFTDEELSSAKNLLRQEMDFVKSKMAHSDLPLEAYSKVWEECYAQVLFLPSQQRYTRAAMASKKDRLESLEKRLELNRYQMTEDAKKAAKIEKKLKVLLGGYQTRAVGLTKQLSDLHEQLEQSQVEMTTFQALRNQELQAIPKRLEALKEDVQRQTEREKQLQAQYSELLYERDSLLSKLQI</sequence>
<keyword id="KW-0131">Cell cycle</keyword>
<keyword id="KW-0175">Coiled coil</keyword>
<keyword id="KW-0963">Cytoplasm</keyword>
<keyword id="KW-0227">DNA damage</keyword>
<keyword id="KW-0234">DNA repair</keyword>
<keyword id="KW-0238">DNA-binding</keyword>
<keyword id="KW-0507">mRNA processing</keyword>
<keyword id="KW-0508">mRNA splicing</keyword>
<keyword id="KW-0539">Nucleus</keyword>
<keyword id="KW-1185">Reference proteome</keyword>
<keyword id="KW-0677">Repeat</keyword>
<keyword id="KW-0694">RNA-binding</keyword>
<keyword id="KW-0747">Spliceosome</keyword>
<proteinExistence type="inferred from homology"/>
<evidence type="ECO:0000250" key="1">
    <source>
        <dbReference type="UniProtKB" id="Q99459"/>
    </source>
</evidence>
<evidence type="ECO:0000255" key="2"/>
<evidence type="ECO:0000255" key="3">
    <source>
        <dbReference type="PROSITE-ProRule" id="PRU00625"/>
    </source>
</evidence>
<evidence type="ECO:0000256" key="4">
    <source>
        <dbReference type="SAM" id="MobiDB-lite"/>
    </source>
</evidence>
<evidence type="ECO:0000305" key="5"/>
<accession>A7SD85</accession>
<name>CDC5L_NEMVE</name>
<feature type="chain" id="PRO_0000342370" description="Cell division cycle 5-related protein">
    <location>
        <begin position="1"/>
        <end position="805"/>
    </location>
</feature>
<feature type="domain" description="HTH myb-type 1" evidence="3">
    <location>
        <begin position="1"/>
        <end position="58"/>
    </location>
</feature>
<feature type="domain" description="HTH myb-type 2" evidence="3">
    <location>
        <begin position="59"/>
        <end position="108"/>
    </location>
</feature>
<feature type="DNA-binding region" description="H-T-H motif" evidence="3">
    <location>
        <begin position="31"/>
        <end position="54"/>
    </location>
</feature>
<feature type="DNA-binding region" description="H-T-H motif" evidence="3">
    <location>
        <begin position="82"/>
        <end position="104"/>
    </location>
</feature>
<feature type="region of interest" description="Disordered" evidence="4">
    <location>
        <begin position="108"/>
        <end position="143"/>
    </location>
</feature>
<feature type="region of interest" description="Disordered" evidence="4">
    <location>
        <begin position="246"/>
        <end position="293"/>
    </location>
</feature>
<feature type="region of interest" description="Disordered" evidence="4">
    <location>
        <begin position="409"/>
        <end position="442"/>
    </location>
</feature>
<feature type="region of interest" description="Disordered" evidence="4">
    <location>
        <begin position="530"/>
        <end position="556"/>
    </location>
</feature>
<feature type="coiled-coil region" evidence="2">
    <location>
        <begin position="142"/>
        <end position="193"/>
    </location>
</feature>
<feature type="coiled-coil region" evidence="2">
    <location>
        <begin position="511"/>
        <end position="542"/>
    </location>
</feature>
<feature type="coiled-coil region" evidence="2">
    <location>
        <begin position="678"/>
        <end position="804"/>
    </location>
</feature>
<feature type="compositionally biased region" description="Basic and acidic residues" evidence="4">
    <location>
        <begin position="108"/>
        <end position="127"/>
    </location>
</feature>
<feature type="compositionally biased region" description="Basic and acidic residues" evidence="4">
    <location>
        <begin position="246"/>
        <end position="274"/>
    </location>
</feature>
<protein>
    <recommendedName>
        <fullName>Cell division cycle 5-related protein</fullName>
    </recommendedName>
    <alternativeName>
        <fullName>Cdc5-like protein</fullName>
    </alternativeName>
</protein>